<sequence length="343" mass="38035">MEQEETYLELYLDQCAAQDGLAPPRSPLFSPVVPYDMYILNASNPDTAFNSNPEVKETSGDFSSVDLSFLPDEVTQENKDQPVISKHETEENSESQSPQSRLPSPSEQDVGLGLNSSSLSNSHSQLHPGDTDSVQPSPEKPNSDSLSLASITPMTPMTPISECCGIVPQLQNIVSTVNLACKLDLKKIALHAKNAEYNPKRFAAVIMRIREPRTTALIFSSGKMVCTGAKSEEQSRLAARKYARVVQKLGFPARFLDFKIQNMVGSCDVRFPIRLEGLVLTHQQFSSYEPELFPGLIYRMVKPRIVLLIFVSGKVVLTGAKERSEIYEAFENIYPILKGFKKA</sequence>
<reference evidence="6 9" key="1">
    <citation type="journal article" date="2003" name="Proc. Natl. Acad. Sci. U.S.A.">
        <title>TRF3, a TATA-box-binding protein-related factor, is vertebrate-specific and widely expressed.</title>
        <authorList>
            <person name="Persengiev S.P."/>
            <person name="Zhu X."/>
            <person name="Dixit B.L."/>
            <person name="Maston G.A."/>
            <person name="Kittler E.L.W."/>
            <person name="Green M.R."/>
        </authorList>
    </citation>
    <scope>NUCLEOTIDE SEQUENCE [MRNA]</scope>
    <scope>SUBCELLULAR LOCATION</scope>
    <scope>TISSUE SPECIFICITY</scope>
</reference>
<reference evidence="6 10" key="2">
    <citation type="journal article" date="2007" name="DNA Cell Biol.">
        <title>Genomics, evolution, and expression of TBPL2, a member of the TBP family.</title>
        <authorList>
            <person name="Di Pietro C."/>
            <person name="Ragusa M."/>
            <person name="Duro L."/>
            <person name="Guglielmino M.R."/>
            <person name="Barbagallo D."/>
            <person name="Carnemolla A."/>
            <person name="Lagana A."/>
            <person name="Buffa P."/>
            <person name="Angelica R."/>
            <person name="Rinaldi A."/>
            <person name="Calafato M.S."/>
            <person name="Milicia I."/>
            <person name="Caserta C."/>
            <person name="Giugno R."/>
            <person name="Pulvirenti A."/>
            <person name="Giunta V."/>
            <person name="Rapisarda A."/>
            <person name="Di Pietro V."/>
            <person name="Grillo A."/>
            <person name="Messina A."/>
            <person name="Ferro A."/>
            <person name="Grzeschik K.H."/>
            <person name="Purrello M."/>
        </authorList>
    </citation>
    <scope>NUCLEOTIDE SEQUENCE [MRNA]</scope>
    <scope>TISSUE SPECIFICITY</scope>
</reference>
<reference evidence="7" key="3">
    <citation type="journal article" date="2004" name="Genome Res.">
        <title>The status, quality, and expansion of the NIH full-length cDNA project: the Mammalian Gene Collection (MGC).</title>
        <authorList>
            <consortium name="The MGC Project Team"/>
        </authorList>
    </citation>
    <scope>NUCLEOTIDE SEQUENCE [LARGE SCALE MRNA]</scope>
</reference>
<feature type="chain" id="PRO_0000318118" description="TATA box-binding protein-like 2">
    <location>
        <begin position="1"/>
        <end position="343"/>
    </location>
</feature>
<feature type="region of interest" description="Disordered" evidence="3">
    <location>
        <begin position="71"/>
        <end position="152"/>
    </location>
</feature>
<feature type="compositionally biased region" description="Basic and acidic residues" evidence="3">
    <location>
        <begin position="76"/>
        <end position="90"/>
    </location>
</feature>
<feature type="compositionally biased region" description="Low complexity" evidence="3">
    <location>
        <begin position="94"/>
        <end position="127"/>
    </location>
</feature>
<feature type="compositionally biased region" description="Polar residues" evidence="3">
    <location>
        <begin position="143"/>
        <end position="152"/>
    </location>
</feature>
<comment type="function">
    <text evidence="1">Transcription factor required in complex with TAF3 for the differentiation of myoblasts into myocytes. The complex replaces TFIID at specific promoters at an early stage in the differentiation process (By similarity).</text>
</comment>
<comment type="subunit">
    <text evidence="1">Interacts with TAF3.</text>
</comment>
<comment type="subcellular location">
    <subcellularLocation>
        <location evidence="4">Cytoplasm</location>
    </subcellularLocation>
    <subcellularLocation>
        <location evidence="4">Nucleus</location>
    </subcellularLocation>
    <text evidence="4">Present in the cytoplasm during cytokinesis.</text>
</comment>
<comment type="tissue specificity">
    <text evidence="4 5">Ubiquitously expressed in all tissues examined with highest levels in heart, lung, ovary, spleen and testes.</text>
</comment>
<comment type="similarity">
    <text evidence="2">Belongs to the TBP family.</text>
</comment>
<comment type="sequence caution" evidence="6">
    <conflict type="erroneous initiation">
        <sequence resource="EMBL-CDS" id="AAI17160"/>
    </conflict>
    <text>Extended N-terminus.</text>
</comment>
<comment type="sequence caution" evidence="6">
    <conflict type="erroneous initiation">
        <sequence resource="EMBL-CDS" id="AAI17186"/>
    </conflict>
    <text>Extended N-terminus.</text>
</comment>
<comment type="sequence caution" evidence="6">
    <conflict type="erroneous initiation">
        <sequence resource="EMBL-CDS" id="AAR24281"/>
    </conflict>
    <text>Extended N-terminus.</text>
</comment>
<comment type="sequence caution" evidence="6">
    <conflict type="erroneous initiation">
        <sequence resource="EMBL-CDS" id="ABD93323"/>
    </conflict>
    <text>Extended N-terminus.</text>
</comment>
<gene>
    <name evidence="8 11" type="primary">TBPL2</name>
    <name type="synonym">TBP2</name>
    <name evidence="9" type="synonym">TRF3</name>
</gene>
<organism>
    <name type="scientific">Homo sapiens</name>
    <name type="common">Human</name>
    <dbReference type="NCBI Taxonomy" id="9606"/>
    <lineage>
        <taxon>Eukaryota</taxon>
        <taxon>Metazoa</taxon>
        <taxon>Chordata</taxon>
        <taxon>Craniata</taxon>
        <taxon>Vertebrata</taxon>
        <taxon>Euteleostomi</taxon>
        <taxon>Mammalia</taxon>
        <taxon>Eutheria</taxon>
        <taxon>Euarchontoglires</taxon>
        <taxon>Primates</taxon>
        <taxon>Haplorrhini</taxon>
        <taxon>Catarrhini</taxon>
        <taxon>Hominidae</taxon>
        <taxon>Homo</taxon>
    </lineage>
</organism>
<keyword id="KW-0963">Cytoplasm</keyword>
<keyword id="KW-0217">Developmental protein</keyword>
<keyword id="KW-0238">DNA-binding</keyword>
<keyword id="KW-0539">Nucleus</keyword>
<keyword id="KW-1185">Reference proteome</keyword>
<keyword id="KW-0804">Transcription</keyword>
<keyword id="KW-0805">Transcription regulation</keyword>
<dbReference type="EMBL" id="AY457923">
    <property type="protein sequence ID" value="AAR24281.1"/>
    <property type="status" value="ALT_INIT"/>
    <property type="molecule type" value="mRNA"/>
</dbReference>
<dbReference type="EMBL" id="DQ448593">
    <property type="protein sequence ID" value="ABD93323.1"/>
    <property type="status" value="ALT_INIT"/>
    <property type="molecule type" value="mRNA"/>
</dbReference>
<dbReference type="EMBL" id="BC117159">
    <property type="protein sequence ID" value="AAI17160.1"/>
    <property type="status" value="ALT_INIT"/>
    <property type="molecule type" value="mRNA"/>
</dbReference>
<dbReference type="EMBL" id="BC117185">
    <property type="protein sequence ID" value="AAI17186.1"/>
    <property type="status" value="ALT_INIT"/>
    <property type="molecule type" value="mRNA"/>
</dbReference>
<dbReference type="CCDS" id="CCDS9724.2"/>
<dbReference type="RefSeq" id="NP_950248.2">
    <property type="nucleotide sequence ID" value="NM_199047.3"/>
</dbReference>
<dbReference type="SMR" id="Q6SJ96"/>
<dbReference type="BioGRID" id="132286">
    <property type="interactions" value="10"/>
</dbReference>
<dbReference type="FunCoup" id="Q6SJ96">
    <property type="interactions" value="267"/>
</dbReference>
<dbReference type="IntAct" id="Q6SJ96">
    <property type="interactions" value="1"/>
</dbReference>
<dbReference type="STRING" id="9606.ENSP00000247219"/>
<dbReference type="PhosphoSitePlus" id="Q6SJ96"/>
<dbReference type="BioMuta" id="TBPL2"/>
<dbReference type="DMDM" id="74749326"/>
<dbReference type="jPOST" id="Q6SJ96"/>
<dbReference type="MassIVE" id="Q6SJ96"/>
<dbReference type="PaxDb" id="9606-ENSP00000247219"/>
<dbReference type="PeptideAtlas" id="Q6SJ96"/>
<dbReference type="ProteomicsDB" id="67358"/>
<dbReference type="Pumba" id="Q6SJ96"/>
<dbReference type="Antibodypedia" id="61077">
    <property type="antibodies" value="122 antibodies from 22 providers"/>
</dbReference>
<dbReference type="DNASU" id="387332"/>
<dbReference type="Ensembl" id="ENST00000247219.6">
    <property type="protein sequence ID" value="ENSP00000247219.6"/>
    <property type="gene ID" value="ENSG00000182521.6"/>
</dbReference>
<dbReference type="GeneID" id="387332"/>
<dbReference type="KEGG" id="hsa:387332"/>
<dbReference type="MANE-Select" id="ENST00000247219.6">
    <property type="protein sequence ID" value="ENSP00000247219.6"/>
    <property type="RefSeq nucleotide sequence ID" value="NM_199047.3"/>
    <property type="RefSeq protein sequence ID" value="NP_950248.2"/>
</dbReference>
<dbReference type="UCSC" id="uc001xby.5">
    <property type="organism name" value="human"/>
</dbReference>
<dbReference type="AGR" id="HGNC:19841"/>
<dbReference type="CTD" id="387332"/>
<dbReference type="DisGeNET" id="387332"/>
<dbReference type="GeneCards" id="TBPL2"/>
<dbReference type="HGNC" id="HGNC:19841">
    <property type="gene designation" value="TBPL2"/>
</dbReference>
<dbReference type="HPA" id="ENSG00000182521">
    <property type="expression patterns" value="Tissue enhanced (skeletal muscle, skin)"/>
</dbReference>
<dbReference type="MIM" id="608964">
    <property type="type" value="gene"/>
</dbReference>
<dbReference type="neXtProt" id="NX_Q6SJ96"/>
<dbReference type="OpenTargets" id="ENSG00000182521"/>
<dbReference type="PharmGKB" id="PA134990291"/>
<dbReference type="VEuPathDB" id="HostDB:ENSG00000182521"/>
<dbReference type="eggNOG" id="KOG3302">
    <property type="taxonomic scope" value="Eukaryota"/>
</dbReference>
<dbReference type="GeneTree" id="ENSGT00940000159561"/>
<dbReference type="HOGENOM" id="CLU_060161_1_2_1"/>
<dbReference type="InParanoid" id="Q6SJ96"/>
<dbReference type="OrthoDB" id="2127950at2759"/>
<dbReference type="PAN-GO" id="Q6SJ96">
    <property type="GO annotations" value="2 GO annotations based on evolutionary models"/>
</dbReference>
<dbReference type="PhylomeDB" id="Q6SJ96"/>
<dbReference type="TreeFam" id="TF300102"/>
<dbReference type="PathwayCommons" id="Q6SJ96"/>
<dbReference type="Reactome" id="R-HSA-9754189">
    <property type="pathway name" value="Germ layer formation at gastrulation"/>
</dbReference>
<dbReference type="SignaLink" id="Q6SJ96"/>
<dbReference type="SIGNOR" id="Q6SJ96"/>
<dbReference type="BioGRID-ORCS" id="387332">
    <property type="hits" value="12 hits in 1152 CRISPR screens"/>
</dbReference>
<dbReference type="ChiTaRS" id="TBPL2">
    <property type="organism name" value="human"/>
</dbReference>
<dbReference type="GenomeRNAi" id="387332"/>
<dbReference type="Pharos" id="Q6SJ96">
    <property type="development level" value="Tbio"/>
</dbReference>
<dbReference type="PRO" id="PR:Q6SJ96"/>
<dbReference type="Proteomes" id="UP000005640">
    <property type="component" value="Chromosome 14"/>
</dbReference>
<dbReference type="RNAct" id="Q6SJ96">
    <property type="molecule type" value="protein"/>
</dbReference>
<dbReference type="Bgee" id="ENSG00000182521">
    <property type="expression patterns" value="Expressed in primordial germ cell in gonad and 40 other cell types or tissues"/>
</dbReference>
<dbReference type="ExpressionAtlas" id="Q6SJ96">
    <property type="expression patterns" value="baseline and differential"/>
</dbReference>
<dbReference type="GO" id="GO:0005737">
    <property type="term" value="C:cytoplasm"/>
    <property type="evidence" value="ECO:0000314"/>
    <property type="project" value="UniProtKB"/>
</dbReference>
<dbReference type="GO" id="GO:0001674">
    <property type="term" value="C:female germ cell nucleus"/>
    <property type="evidence" value="ECO:0007669"/>
    <property type="project" value="Ensembl"/>
</dbReference>
<dbReference type="GO" id="GO:0005634">
    <property type="term" value="C:nucleus"/>
    <property type="evidence" value="ECO:0000314"/>
    <property type="project" value="UniProtKB"/>
</dbReference>
<dbReference type="GO" id="GO:0003677">
    <property type="term" value="F:DNA binding"/>
    <property type="evidence" value="ECO:0007669"/>
    <property type="project" value="UniProtKB-KW"/>
</dbReference>
<dbReference type="GO" id="GO:0016251">
    <property type="term" value="F:RNA polymerase II general transcription initiation factor activity"/>
    <property type="evidence" value="ECO:0000318"/>
    <property type="project" value="GO_Central"/>
</dbReference>
<dbReference type="GO" id="GO:0006352">
    <property type="term" value="P:DNA-templated transcription initiation"/>
    <property type="evidence" value="ECO:0000318"/>
    <property type="project" value="GO_Central"/>
</dbReference>
<dbReference type="CDD" id="cd04516">
    <property type="entry name" value="TBP_eukaryotes"/>
    <property type="match status" value="1"/>
</dbReference>
<dbReference type="FunFam" id="3.30.310.10:FF:000001">
    <property type="entry name" value="TATA-box-binding protein 2"/>
    <property type="match status" value="1"/>
</dbReference>
<dbReference type="FunFam" id="3.30.310.10:FF:000002">
    <property type="entry name" value="TATA-box-binding protein 2"/>
    <property type="match status" value="1"/>
</dbReference>
<dbReference type="Gene3D" id="3.30.310.10">
    <property type="entry name" value="TATA-Binding Protein"/>
    <property type="match status" value="2"/>
</dbReference>
<dbReference type="HAMAP" id="MF_00408">
    <property type="entry name" value="TATA_bind_prot_arch"/>
    <property type="match status" value="1"/>
</dbReference>
<dbReference type="InterPro" id="IPR000814">
    <property type="entry name" value="TBP"/>
</dbReference>
<dbReference type="InterPro" id="IPR030491">
    <property type="entry name" value="TBP_CS"/>
</dbReference>
<dbReference type="InterPro" id="IPR012295">
    <property type="entry name" value="TBP_dom_sf"/>
</dbReference>
<dbReference type="InterPro" id="IPR033710">
    <property type="entry name" value="TBP_eukaryotic"/>
</dbReference>
<dbReference type="PANTHER" id="PTHR10126">
    <property type="entry name" value="TATA-BOX BINDING PROTEIN"/>
    <property type="match status" value="1"/>
</dbReference>
<dbReference type="Pfam" id="PF00352">
    <property type="entry name" value="TBP"/>
    <property type="match status" value="2"/>
</dbReference>
<dbReference type="PRINTS" id="PR00686">
    <property type="entry name" value="TIFACTORIID"/>
</dbReference>
<dbReference type="SUPFAM" id="SSF55945">
    <property type="entry name" value="TATA-box binding protein-like"/>
    <property type="match status" value="2"/>
</dbReference>
<dbReference type="PROSITE" id="PS00351">
    <property type="entry name" value="TFIID"/>
    <property type="match status" value="2"/>
</dbReference>
<protein>
    <recommendedName>
        <fullName>TATA box-binding protein-like 2</fullName>
        <shortName>TBP-like 2</shortName>
    </recommendedName>
    <alternativeName>
        <fullName>TATA box-binding protein-related factor 3</fullName>
        <shortName>TBP-related factor 3</shortName>
    </alternativeName>
</protein>
<evidence type="ECO:0000250" key="1">
    <source>
        <dbReference type="UniProtKB" id="Q6SJ95"/>
    </source>
</evidence>
<evidence type="ECO:0000255" key="2"/>
<evidence type="ECO:0000256" key="3">
    <source>
        <dbReference type="SAM" id="MobiDB-lite"/>
    </source>
</evidence>
<evidence type="ECO:0000269" key="4">
    <source>
    </source>
</evidence>
<evidence type="ECO:0000269" key="5">
    <source>
    </source>
</evidence>
<evidence type="ECO:0000305" key="6"/>
<evidence type="ECO:0000312" key="7">
    <source>
        <dbReference type="EMBL" id="AAI17160.1"/>
    </source>
</evidence>
<evidence type="ECO:0000312" key="8">
    <source>
        <dbReference type="EMBL" id="AAI17186.1"/>
    </source>
</evidence>
<evidence type="ECO:0000312" key="9">
    <source>
        <dbReference type="EMBL" id="AAR24281.1"/>
    </source>
</evidence>
<evidence type="ECO:0000312" key="10">
    <source>
        <dbReference type="EMBL" id="ABD93323.1"/>
    </source>
</evidence>
<evidence type="ECO:0000312" key="11">
    <source>
        <dbReference type="HGNC" id="HGNC:19841"/>
    </source>
</evidence>
<name>TBPL2_HUMAN</name>
<proteinExistence type="evidence at transcript level"/>
<accession>Q6SJ96</accession>
<accession>Q17RU8</accession>